<gene>
    <name evidence="7" type="primary">easE</name>
</gene>
<sequence>MRHFVTFVVGFLLSWGFLSSLQDPPSCRCRPWEPCWPDSHQWTSLNASIDGNLVHVQPVGSVCHDPHYDAVACGDVLDLSRNSGWRASNPATLQDWIWETGSGDNESCLLVSSSERPQEIPCHQGRLPLYSAAVKSTAHVQGVIRFAKDHNLRLVIKNTGHDATGRSAAPDSLQIHTYFLKDIHYDDNFLVHGDATGSGPAVTLGAGVVHSEVYKHGIDHKYSVVGGECPTVGIVGGFLQGGGVSSWSGFTRGLAVDNVLEYQVVTANAELVIANEHQNQDLFWALRGGGGGTFGVVTQATVRAFPDDPTVVSTLVLSSTRADTSFWVKAISRLLSILRSCNQQNVHGQLIITRPSVDILNAGLTLHFSNMTNVLHAETLLQPHIASLSEDQISTTLTSKFVANINSELRLDADIHPRGIGTLQTSMMISNELFGSSEGPLTVAQVFGKLPIGPNDLLFTSNLGGCIAANKGLDTAIHPAWRSSAHLVTYVRSVEPSIEAKKLALKEITNKYMPILYSMQPSFKVSYRNLGDPNEKNYQEVFWGEKVYKRLASIKAKLDPDGLFISKLGVGSEDWDTEGMCYQPQNRVSQPLRSLKYFLSVLKDT</sequence>
<name>EASE_EPIFI</name>
<feature type="signal peptide" evidence="2">
    <location>
        <begin position="1"/>
        <end position="20"/>
    </location>
</feature>
<feature type="chain" id="PRO_5002646853" description="FAD-linked oxidoreductase easE" evidence="2">
    <location>
        <begin position="21"/>
        <end position="605"/>
    </location>
</feature>
<feature type="domain" description="FAD-binding PCMH-type" evidence="4">
    <location>
        <begin position="122"/>
        <end position="307"/>
    </location>
</feature>
<feature type="glycosylation site" description="N-linked (GlcNAc...) asparagine" evidence="3">
    <location>
        <position position="46"/>
    </location>
</feature>
<feature type="glycosylation site" description="N-linked (GlcNAc...) asparagine" evidence="3">
    <location>
        <position position="105"/>
    </location>
</feature>
<feature type="glycosylation site" description="N-linked (GlcNAc...) asparagine" evidence="3">
    <location>
        <position position="370"/>
    </location>
</feature>
<evidence type="ECO:0000250" key="1">
    <source>
        <dbReference type="UniProtKB" id="Q50EL0"/>
    </source>
</evidence>
<evidence type="ECO:0000255" key="2"/>
<evidence type="ECO:0000255" key="3">
    <source>
        <dbReference type="PROSITE-ProRule" id="PRU00498"/>
    </source>
</evidence>
<evidence type="ECO:0000255" key="4">
    <source>
        <dbReference type="PROSITE-ProRule" id="PRU00718"/>
    </source>
</evidence>
<evidence type="ECO:0000269" key="5">
    <source>
    </source>
</evidence>
<evidence type="ECO:0000269" key="6">
    <source>
    </source>
</evidence>
<evidence type="ECO:0000303" key="7">
    <source>
    </source>
</evidence>
<evidence type="ECO:0000305" key="8"/>
<evidence type="ECO:0000305" key="9">
    <source>
    </source>
</evidence>
<reference key="1">
    <citation type="journal article" date="2007" name="Appl. Environ. Microbiol.">
        <title>A complex ergovaline gene cluster in epichloe endophytes of grasses.</title>
        <authorList>
            <person name="Fleetwood D.J."/>
            <person name="Scott B."/>
            <person name="Lane G.A."/>
            <person name="Tanaka A."/>
            <person name="Johnson R.D."/>
        </authorList>
    </citation>
    <scope>NUCLEOTIDE SEQUENCE [GENOMIC DNA]</scope>
    <scope>FUNCTION</scope>
    <scope>INDUCTION</scope>
    <source>
        <strain>Lp19</strain>
    </source>
</reference>
<reference key="2">
    <citation type="journal article" date="2001" name="Proc. Natl. Acad. Sci. U.S.A.">
        <title>Elimination of ergovaline from a grass-Neotyphodium endophyte symbiosis by genetic modification of the endophyte.</title>
        <authorList>
            <person name="Panaccione D.G."/>
            <person name="Johnson R.D."/>
            <person name="Wang J."/>
            <person name="Young C.A."/>
            <person name="Damrongkool P."/>
            <person name="Scott B."/>
            <person name="Schardl C.L."/>
        </authorList>
    </citation>
    <scope>FUNCTION</scope>
</reference>
<comment type="function">
    <text evidence="1 5 6">FAD-linked oxidoreductase; part of the gene cluster that mediates the biosynthesis of fungal ergot alkaloid ergovaline, the predominant ergopeptine product in E.festucae var. lolii (PubMed:17308187). DmaW catalyzes the first step of ergot alkaloid biosynthesis by condensing dimethylallyl diphosphate (DMAP) and tryptophan to form 4-dimethylallyl-L-tryptophan (By similarity). The second step is catalyzed by the methyltransferase easF that methylates 4-dimethylallyl-L-tryptophan in the presence of S-adenosyl-L-methionine, resulting in the formation of 4-dimethylallyl-L-abrine (By similarity). The catalase easC and the FAD-dependent oxidoreductase easE then transform 4-dimethylallyl-L-abrine to chanoclavine-I which is further oxidized by easD in the presence of NAD(+), resulting in the formation of chanoclavine-I aldehyde (By similarity). Agroclavine dehydrogenase easG then mediates the conversion of chanoclavine-I aldehyde to agroclavine via a non-enzymatic adduct reaction: the substrate is an iminium intermediate that is formed spontaneously from chanoclavine-I aldehyde in the presence of glutathione (By similarity). The presence of easA is not required to complete this reaction (By similarity). Further conversion of agroclavine to paspalic acid is a two-step process involving oxidation of agroclavine to elymoclavine and of elymoclavine to paspalic acid, the second step being performed by the elymoclavine oxidase cloA (By similarity). Paspalic acid is then further converted to D-lysergic acid (By similarity). Ergovaline is assembled from D-lysergic acid and three different amino acids by the D-lysergyl-peptide-synthetase composed of a monomudular (lpsB) and a trimodular (lpsA) nonribosomal peptide synthetase subunit (PubMed:11592979, PubMed:17308187).</text>
</comment>
<comment type="cofactor">
    <cofactor evidence="8">
        <name>FAD</name>
        <dbReference type="ChEBI" id="CHEBI:57692"/>
    </cofactor>
</comment>
<comment type="pathway">
    <text evidence="9">Alkaloid biosynthesis; ergot alkaloid biosynthesis.</text>
</comment>
<comment type="induction">
    <text evidence="6">Strongly expressed in planta but not expressed in axenic culture (PubMed:17308187).</text>
</comment>
<comment type="similarity">
    <text evidence="8">Belongs to the oxygen-dependent FAD-linked oxidoreductase family.</text>
</comment>
<accession>A2TBU3</accession>
<dbReference type="EC" id="1.-.-.-" evidence="9"/>
<dbReference type="EMBL" id="EF125025">
    <property type="protein sequence ID" value="ABM91450.1"/>
    <property type="molecule type" value="Genomic_DNA"/>
</dbReference>
<dbReference type="SMR" id="A2TBU3"/>
<dbReference type="GlyCosmos" id="A2TBU3">
    <property type="glycosylation" value="3 sites, No reported glycans"/>
</dbReference>
<dbReference type="UniPathway" id="UPA00327"/>
<dbReference type="GO" id="GO:0071949">
    <property type="term" value="F:FAD binding"/>
    <property type="evidence" value="ECO:0007669"/>
    <property type="project" value="InterPro"/>
</dbReference>
<dbReference type="GO" id="GO:0016491">
    <property type="term" value="F:oxidoreductase activity"/>
    <property type="evidence" value="ECO:0007669"/>
    <property type="project" value="UniProtKB-KW"/>
</dbReference>
<dbReference type="GO" id="GO:0035835">
    <property type="term" value="P:indole alkaloid biosynthetic process"/>
    <property type="evidence" value="ECO:0007669"/>
    <property type="project" value="UniProtKB-UniPathway"/>
</dbReference>
<dbReference type="Gene3D" id="3.30.465.10">
    <property type="match status" value="1"/>
</dbReference>
<dbReference type="Gene3D" id="3.40.462.20">
    <property type="match status" value="1"/>
</dbReference>
<dbReference type="InterPro" id="IPR012951">
    <property type="entry name" value="BBE"/>
</dbReference>
<dbReference type="InterPro" id="IPR016166">
    <property type="entry name" value="FAD-bd_PCMH"/>
</dbReference>
<dbReference type="InterPro" id="IPR036318">
    <property type="entry name" value="FAD-bd_PCMH-like_sf"/>
</dbReference>
<dbReference type="InterPro" id="IPR016169">
    <property type="entry name" value="FAD-bd_PCMH_sub2"/>
</dbReference>
<dbReference type="InterPro" id="IPR050432">
    <property type="entry name" value="FAD-linked_Oxidoreductases_BP"/>
</dbReference>
<dbReference type="InterPro" id="IPR006094">
    <property type="entry name" value="Oxid_FAD_bind_N"/>
</dbReference>
<dbReference type="PANTHER" id="PTHR13878:SF98">
    <property type="entry name" value="FAD-LINKED OXIDOREDUCTASE ASQF"/>
    <property type="match status" value="1"/>
</dbReference>
<dbReference type="PANTHER" id="PTHR13878">
    <property type="entry name" value="GULONOLACTONE OXIDASE"/>
    <property type="match status" value="1"/>
</dbReference>
<dbReference type="Pfam" id="PF08031">
    <property type="entry name" value="BBE"/>
    <property type="match status" value="1"/>
</dbReference>
<dbReference type="Pfam" id="PF01565">
    <property type="entry name" value="FAD_binding_4"/>
    <property type="match status" value="1"/>
</dbReference>
<dbReference type="SUPFAM" id="SSF56176">
    <property type="entry name" value="FAD-binding/transporter-associated domain-like"/>
    <property type="match status" value="1"/>
</dbReference>
<dbReference type="PROSITE" id="PS51387">
    <property type="entry name" value="FAD_PCMH"/>
    <property type="match status" value="1"/>
</dbReference>
<organism>
    <name type="scientific">Epichloe festucae var. lolii</name>
    <name type="common">Neotyphodium lolii</name>
    <name type="synonym">Acremonium lolii</name>
    <dbReference type="NCBI Taxonomy" id="73839"/>
    <lineage>
        <taxon>Eukaryota</taxon>
        <taxon>Fungi</taxon>
        <taxon>Dikarya</taxon>
        <taxon>Ascomycota</taxon>
        <taxon>Pezizomycotina</taxon>
        <taxon>Sordariomycetes</taxon>
        <taxon>Hypocreomycetidae</taxon>
        <taxon>Hypocreales</taxon>
        <taxon>Clavicipitaceae</taxon>
        <taxon>Epichloe</taxon>
    </lineage>
</organism>
<protein>
    <recommendedName>
        <fullName evidence="7">FAD-linked oxidoreductase easE</fullName>
        <ecNumber evidence="9">1.-.-.-</ecNumber>
    </recommendedName>
    <alternativeName>
        <fullName evidence="8">Chanoclavine I synthase</fullName>
    </alternativeName>
    <alternativeName>
        <fullName evidence="7">Ergot alkaloid synthesis protein E</fullName>
    </alternativeName>
</protein>
<keyword id="KW-0017">Alkaloid metabolism</keyword>
<keyword id="KW-0274">FAD</keyword>
<keyword id="KW-0285">Flavoprotein</keyword>
<keyword id="KW-0325">Glycoprotein</keyword>
<keyword id="KW-0560">Oxidoreductase</keyword>
<keyword id="KW-0732">Signal</keyword>
<proteinExistence type="evidence at transcript level"/>